<accession>Q9C1J2</accession>
<protein>
    <recommendedName>
        <fullName>Orotidine 5'-phosphate decarboxylase</fullName>
        <ecNumber>4.1.1.23</ecNumber>
    </recommendedName>
    <alternativeName>
        <fullName>OMP decarboxylase</fullName>
        <shortName>OMPDCase</shortName>
        <shortName>OMPdecase</shortName>
    </alternativeName>
    <alternativeName>
        <fullName>Uridine 5'-monophosphate synthase</fullName>
        <shortName>UMP synthase</shortName>
    </alternativeName>
</protein>
<evidence type="ECO:0000250" key="1"/>
<evidence type="ECO:0000255" key="2">
    <source>
        <dbReference type="PROSITE-ProRule" id="PRU10110"/>
    </source>
</evidence>
<evidence type="ECO:0000305" key="3"/>
<gene>
    <name type="primary">URA3</name>
</gene>
<name>PYRF_PICPA</name>
<feature type="chain" id="PRO_0000134674" description="Orotidine 5'-phosphate decarboxylase">
    <location>
        <begin position="1"/>
        <end position="263"/>
    </location>
</feature>
<feature type="active site" description="Proton donor" evidence="2">
    <location>
        <position position="92"/>
    </location>
</feature>
<feature type="binding site" evidence="1">
    <location>
        <position position="36"/>
    </location>
    <ligand>
        <name>substrate</name>
    </ligand>
</feature>
<feature type="binding site" evidence="1">
    <location>
        <begin position="58"/>
        <end position="60"/>
    </location>
    <ligand>
        <name>substrate</name>
    </ligand>
</feature>
<feature type="binding site" evidence="1">
    <location>
        <begin position="90"/>
        <end position="99"/>
    </location>
    <ligand>
        <name>substrate</name>
    </ligand>
</feature>
<feature type="binding site" evidence="1">
    <location>
        <position position="216"/>
    </location>
    <ligand>
        <name>substrate</name>
    </ligand>
</feature>
<feature type="binding site" evidence="1">
    <location>
        <position position="234"/>
    </location>
    <ligand>
        <name>substrate</name>
    </ligand>
</feature>
<comment type="catalytic activity">
    <reaction evidence="2">
        <text>orotidine 5'-phosphate + H(+) = UMP + CO2</text>
        <dbReference type="Rhea" id="RHEA:11596"/>
        <dbReference type="ChEBI" id="CHEBI:15378"/>
        <dbReference type="ChEBI" id="CHEBI:16526"/>
        <dbReference type="ChEBI" id="CHEBI:57538"/>
        <dbReference type="ChEBI" id="CHEBI:57865"/>
        <dbReference type="EC" id="4.1.1.23"/>
    </reaction>
</comment>
<comment type="pathway">
    <text>Pyrimidine metabolism; UMP biosynthesis via de novo pathway; UMP from orotate: step 2/2.</text>
</comment>
<comment type="similarity">
    <text evidence="3">Belongs to the OMP decarboxylase family.</text>
</comment>
<organism>
    <name type="scientific">Komagataella pastoris</name>
    <name type="common">Yeast</name>
    <name type="synonym">Pichia pastoris</name>
    <dbReference type="NCBI Taxonomy" id="4922"/>
    <lineage>
        <taxon>Eukaryota</taxon>
        <taxon>Fungi</taxon>
        <taxon>Dikarya</taxon>
        <taxon>Ascomycota</taxon>
        <taxon>Saccharomycotina</taxon>
        <taxon>Pichiomycetes</taxon>
        <taxon>Pichiales</taxon>
        <taxon>Pichiaceae</taxon>
        <taxon>Komagataella</taxon>
    </lineage>
</organism>
<sequence>MARSYAERANTHQSPVARRLFALMEQKQSNLCASVDVRTTKELLELLDKLGPFICLAKTHIDIIDDFTYDGTILPLLELSKKHKFLIFEDRKFADIGNTVKHQYQGGVYKIAQWADITNAHGVIGSGIVKGLKEAATETTDQPRGLLMLAELSSKGSIAHGKYTEETVEIAKSDKEFVIGFIAQNSMGGQDEGFDWIIMTPGVGLDDTGDALGQQYRTVSQVFSTGTDIIIVGRGLFGKGRDPLKEGERYRKAGWEAYQNILR</sequence>
<keyword id="KW-0210">Decarboxylase</keyword>
<keyword id="KW-0456">Lyase</keyword>
<keyword id="KW-0665">Pyrimidine biosynthesis</keyword>
<reference key="1">
    <citation type="journal article" date="2001" name="Gene">
        <title>New selectable marker/auxotrophic host strain combinations for molecular genetic manipulation of Pichia pastoris.</title>
        <authorList>
            <person name="Lin Cereghino G.P."/>
            <person name="Lin Cereghino J."/>
            <person name="Sunga A.J."/>
            <person name="Johnson M.A."/>
            <person name="Lim M."/>
            <person name="Gleeson M.A.G."/>
            <person name="Cregg J.M."/>
        </authorList>
    </citation>
    <scope>NUCLEOTIDE SEQUENCE [GENOMIC DNA]</scope>
</reference>
<proteinExistence type="inferred from homology"/>
<dbReference type="EC" id="4.1.1.23"/>
<dbReference type="EMBL" id="AF321098">
    <property type="protein sequence ID" value="AAK06768.1"/>
    <property type="molecule type" value="Genomic_DNA"/>
</dbReference>
<dbReference type="SMR" id="Q9C1J2"/>
<dbReference type="UniPathway" id="UPA00070">
    <property type="reaction ID" value="UER00120"/>
</dbReference>
<dbReference type="GO" id="GO:0004588">
    <property type="term" value="F:orotate phosphoribosyltransferase activity"/>
    <property type="evidence" value="ECO:0007669"/>
    <property type="project" value="TreeGrafter"/>
</dbReference>
<dbReference type="GO" id="GO:0004590">
    <property type="term" value="F:orotidine-5'-phosphate decarboxylase activity"/>
    <property type="evidence" value="ECO:0007669"/>
    <property type="project" value="UniProtKB-EC"/>
</dbReference>
<dbReference type="GO" id="GO:0006207">
    <property type="term" value="P:'de novo' pyrimidine nucleobase biosynthetic process"/>
    <property type="evidence" value="ECO:0007669"/>
    <property type="project" value="InterPro"/>
</dbReference>
<dbReference type="GO" id="GO:0044205">
    <property type="term" value="P:'de novo' UMP biosynthetic process"/>
    <property type="evidence" value="ECO:0007669"/>
    <property type="project" value="UniProtKB-UniPathway"/>
</dbReference>
<dbReference type="CDD" id="cd04725">
    <property type="entry name" value="OMP_decarboxylase_like"/>
    <property type="match status" value="1"/>
</dbReference>
<dbReference type="FunFam" id="3.20.20.70:FF:000114">
    <property type="entry name" value="Decarboxylase,orotidine phosphate"/>
    <property type="match status" value="1"/>
</dbReference>
<dbReference type="Gene3D" id="3.20.20.70">
    <property type="entry name" value="Aldolase class I"/>
    <property type="match status" value="1"/>
</dbReference>
<dbReference type="InterPro" id="IPR013785">
    <property type="entry name" value="Aldolase_TIM"/>
</dbReference>
<dbReference type="InterPro" id="IPR014732">
    <property type="entry name" value="OMPdecase"/>
</dbReference>
<dbReference type="InterPro" id="IPR018089">
    <property type="entry name" value="OMPdecase_AS"/>
</dbReference>
<dbReference type="InterPro" id="IPR001754">
    <property type="entry name" value="OMPdeCOase_dom"/>
</dbReference>
<dbReference type="InterPro" id="IPR011060">
    <property type="entry name" value="RibuloseP-bd_barrel"/>
</dbReference>
<dbReference type="NCBIfam" id="TIGR01740">
    <property type="entry name" value="pyrF"/>
    <property type="match status" value="1"/>
</dbReference>
<dbReference type="PANTHER" id="PTHR19278">
    <property type="entry name" value="OROTATE PHOSPHORIBOSYLTRANSFERASE"/>
    <property type="match status" value="1"/>
</dbReference>
<dbReference type="PANTHER" id="PTHR19278:SF9">
    <property type="entry name" value="URIDINE 5'-MONOPHOSPHATE SYNTHASE"/>
    <property type="match status" value="1"/>
</dbReference>
<dbReference type="Pfam" id="PF00215">
    <property type="entry name" value="OMPdecase"/>
    <property type="match status" value="1"/>
</dbReference>
<dbReference type="SMART" id="SM00934">
    <property type="entry name" value="OMPdecase"/>
    <property type="match status" value="1"/>
</dbReference>
<dbReference type="SUPFAM" id="SSF51366">
    <property type="entry name" value="Ribulose-phoshate binding barrel"/>
    <property type="match status" value="1"/>
</dbReference>
<dbReference type="PROSITE" id="PS00156">
    <property type="entry name" value="OMPDECASE"/>
    <property type="match status" value="1"/>
</dbReference>